<proteinExistence type="inferred from homology"/>
<organism>
    <name type="scientific">Saccharomyces cerevisiae (strain ATCC 204508 / S288c)</name>
    <name type="common">Baker's yeast</name>
    <dbReference type="NCBI Taxonomy" id="559292"/>
    <lineage>
        <taxon>Eukaryota</taxon>
        <taxon>Fungi</taxon>
        <taxon>Dikarya</taxon>
        <taxon>Ascomycota</taxon>
        <taxon>Saccharomycotina</taxon>
        <taxon>Saccharomycetes</taxon>
        <taxon>Saccharomycetales</taxon>
        <taxon>Saccharomycetaceae</taxon>
        <taxon>Saccharomyces</taxon>
    </lineage>
</organism>
<gene>
    <name type="primary">ERS1</name>
    <name type="ordered locus">YCR075C</name>
    <name type="ORF">YCR75C</name>
</gene>
<sequence>MVSLDDILGIVYVTSWSISMYPPIITNWRHKSASAISMDFVMLNTAGYSYLVISIFLQLYCWKMTGDESDLGRPKLTQFDFWYCLHGCLMNVVLLTQVVAGARIWRFPGKGHRKMNPWYLRILLASLAIFSLLTVQFMYSNYWYDWHNSRTLAYCNNLFLLKISMSLIKYIPQVTHNSTRKSMDCFPIQGVFLDVTGGIASLLQLIWQLSNDQGFSLDTFVTNFGKVGLSMVTLIFNFIFIMQWFVYRSRGHDLASEYPL</sequence>
<accession>P17261</accession>
<accession>D6VR77</accession>
<protein>
    <recommendedName>
        <fullName>Cystine transporter</fullName>
    </recommendedName>
    <alternativeName>
        <fullName>ERD suppressor</fullName>
    </alternativeName>
    <alternativeName>
        <fullName>Transmembrane protein ERS1</fullName>
    </alternativeName>
</protein>
<dbReference type="EMBL" id="X52468">
    <property type="protein sequence ID" value="CAA36706.1"/>
    <property type="molecule type" value="Genomic_DNA"/>
</dbReference>
<dbReference type="EMBL" id="X59720">
    <property type="protein sequence ID" value="CAA42264.1"/>
    <property type="molecule type" value="Genomic_DNA"/>
</dbReference>
<dbReference type="EMBL" id="BK006937">
    <property type="protein sequence ID" value="DAA07546.1"/>
    <property type="molecule type" value="Genomic_DNA"/>
</dbReference>
<dbReference type="PIR" id="S22850">
    <property type="entry name" value="S22850"/>
</dbReference>
<dbReference type="RefSeq" id="NP_010000.1">
    <property type="nucleotide sequence ID" value="NM_001178784.1"/>
</dbReference>
<dbReference type="SMR" id="P17261"/>
<dbReference type="BioGRID" id="31050">
    <property type="interactions" value="145"/>
</dbReference>
<dbReference type="DIP" id="DIP-8250N"/>
<dbReference type="FunCoup" id="P17261">
    <property type="interactions" value="271"/>
</dbReference>
<dbReference type="IntAct" id="P17261">
    <property type="interactions" value="4"/>
</dbReference>
<dbReference type="MINT" id="P17261"/>
<dbReference type="STRING" id="4932.YCR075C"/>
<dbReference type="TCDB" id="2.A.43.1.3">
    <property type="family name" value="the lysosomal cystine transporter (lct) family"/>
</dbReference>
<dbReference type="GlyCosmos" id="P17261">
    <property type="glycosylation" value="1 site, No reported glycans"/>
</dbReference>
<dbReference type="GlyGen" id="P17261">
    <property type="glycosylation" value="1 site"/>
</dbReference>
<dbReference type="PaxDb" id="4932-YCR075C"/>
<dbReference type="PeptideAtlas" id="P17261"/>
<dbReference type="DNASU" id="850438"/>
<dbReference type="EnsemblFungi" id="YCR075C_mRNA">
    <property type="protein sequence ID" value="YCR075C"/>
    <property type="gene ID" value="YCR075C"/>
</dbReference>
<dbReference type="GeneID" id="850438"/>
<dbReference type="KEGG" id="sce:YCR075C"/>
<dbReference type="AGR" id="SGD:S000000671"/>
<dbReference type="SGD" id="S000000671">
    <property type="gene designation" value="ERS1"/>
</dbReference>
<dbReference type="VEuPathDB" id="FungiDB:YCR075C"/>
<dbReference type="eggNOG" id="KOG3145">
    <property type="taxonomic scope" value="Eukaryota"/>
</dbReference>
<dbReference type="GeneTree" id="ENSGT00390000005338"/>
<dbReference type="HOGENOM" id="CLU_046327_0_0_1"/>
<dbReference type="InParanoid" id="P17261"/>
<dbReference type="OMA" id="LAFAYHG"/>
<dbReference type="OrthoDB" id="75720at2759"/>
<dbReference type="BioCyc" id="YEAST:G3O-29374-MONOMER"/>
<dbReference type="Reactome" id="R-SCE-425393">
    <property type="pathway name" value="Transport of inorganic cations/anions and amino acids/oligopeptides"/>
</dbReference>
<dbReference type="Reactome" id="R-SCE-5223345">
    <property type="pathway name" value="Miscellaneous transport and binding events"/>
</dbReference>
<dbReference type="BioGRID-ORCS" id="850438">
    <property type="hits" value="0 hits in 10 CRISPR screens"/>
</dbReference>
<dbReference type="PRO" id="PR:P17261"/>
<dbReference type="Proteomes" id="UP000002311">
    <property type="component" value="Chromosome III"/>
</dbReference>
<dbReference type="RNAct" id="P17261">
    <property type="molecule type" value="protein"/>
</dbReference>
<dbReference type="GO" id="GO:0005768">
    <property type="term" value="C:endosome"/>
    <property type="evidence" value="ECO:0000314"/>
    <property type="project" value="SGD"/>
</dbReference>
<dbReference type="GO" id="GO:0010008">
    <property type="term" value="C:endosome membrane"/>
    <property type="evidence" value="ECO:0007669"/>
    <property type="project" value="UniProtKB-SubCell"/>
</dbReference>
<dbReference type="GO" id="GO:0000324">
    <property type="term" value="C:fungal-type vacuole"/>
    <property type="evidence" value="ECO:0000314"/>
    <property type="project" value="SGD"/>
</dbReference>
<dbReference type="GO" id="GO:0005886">
    <property type="term" value="C:plasma membrane"/>
    <property type="evidence" value="ECO:0000314"/>
    <property type="project" value="SGD"/>
</dbReference>
<dbReference type="GO" id="GO:0005774">
    <property type="term" value="C:vacuolar membrane"/>
    <property type="evidence" value="ECO:0000318"/>
    <property type="project" value="GO_Central"/>
</dbReference>
<dbReference type="GO" id="GO:0015184">
    <property type="term" value="F:L-cystine transmembrane transporter activity"/>
    <property type="evidence" value="ECO:0000316"/>
    <property type="project" value="SGD"/>
</dbReference>
<dbReference type="GO" id="GO:0015293">
    <property type="term" value="F:symporter activity"/>
    <property type="evidence" value="ECO:0007669"/>
    <property type="project" value="UniProtKB-KW"/>
</dbReference>
<dbReference type="GO" id="GO:0015811">
    <property type="term" value="P:L-cystine transport"/>
    <property type="evidence" value="ECO:0000314"/>
    <property type="project" value="SGD"/>
</dbReference>
<dbReference type="InterPro" id="IPR005282">
    <property type="entry name" value="LC_transporter"/>
</dbReference>
<dbReference type="InterPro" id="IPR006603">
    <property type="entry name" value="PQ-loop_rpt"/>
</dbReference>
<dbReference type="NCBIfam" id="TIGR00951">
    <property type="entry name" value="2A43"/>
    <property type="match status" value="1"/>
</dbReference>
<dbReference type="PANTHER" id="PTHR13131">
    <property type="entry name" value="CYSTINOSIN"/>
    <property type="match status" value="1"/>
</dbReference>
<dbReference type="PANTHER" id="PTHR13131:SF5">
    <property type="entry name" value="CYSTINOSIN"/>
    <property type="match status" value="1"/>
</dbReference>
<dbReference type="Pfam" id="PF04193">
    <property type="entry name" value="PQ-loop"/>
    <property type="match status" value="2"/>
</dbReference>
<dbReference type="SMART" id="SM00679">
    <property type="entry name" value="CTNS"/>
    <property type="match status" value="2"/>
</dbReference>
<feature type="chain" id="PRO_0000205519" description="Cystine transporter">
    <location>
        <begin position="1"/>
        <end position="260"/>
    </location>
</feature>
<feature type="transmembrane region" description="Helical" evidence="2">
    <location>
        <begin position="7"/>
        <end position="28"/>
    </location>
</feature>
<feature type="transmembrane region" description="Helical" evidence="2">
    <location>
        <begin position="40"/>
        <end position="62"/>
    </location>
</feature>
<feature type="transmembrane region" description="Helical" evidence="2">
    <location>
        <begin position="81"/>
        <end position="102"/>
    </location>
</feature>
<feature type="transmembrane region" description="Helical" evidence="2">
    <location>
        <begin position="118"/>
        <end position="138"/>
    </location>
</feature>
<feature type="transmembrane region" description="Helical" evidence="2">
    <location>
        <begin position="151"/>
        <end position="175"/>
    </location>
</feature>
<feature type="transmembrane region" description="Helical" evidence="2">
    <location>
        <begin position="185"/>
        <end position="205"/>
    </location>
</feature>
<feature type="transmembrane region" description="Helical" evidence="2">
    <location>
        <begin position="227"/>
        <end position="247"/>
    </location>
</feature>
<feature type="domain" description="PQ-loop 1">
    <location>
        <begin position="1"/>
        <end position="67"/>
    </location>
</feature>
<feature type="domain" description="PQ-loop 2">
    <location>
        <begin position="162"/>
        <end position="212"/>
    </location>
</feature>
<feature type="glycosylation site" description="N-linked (GlcNAc...) asparagine" evidence="2">
    <location>
        <position position="177"/>
    </location>
</feature>
<keyword id="KW-0967">Endosome</keyword>
<keyword id="KW-0325">Glycoprotein</keyword>
<keyword id="KW-0472">Membrane</keyword>
<keyword id="KW-1185">Reference proteome</keyword>
<keyword id="KW-0677">Repeat</keyword>
<keyword id="KW-0769">Symport</keyword>
<keyword id="KW-0812">Transmembrane</keyword>
<keyword id="KW-1133">Transmembrane helix</keyword>
<keyword id="KW-0813">Transport</keyword>
<keyword id="KW-0926">Vacuole</keyword>
<evidence type="ECO:0000250" key="1">
    <source>
        <dbReference type="UniProtKB" id="O60931"/>
    </source>
</evidence>
<evidence type="ECO:0000255" key="2"/>
<evidence type="ECO:0000269" key="3">
    <source>
    </source>
</evidence>
<evidence type="ECO:0000305" key="4"/>
<reference key="1">
    <citation type="journal article" date="1990" name="Nucleic Acids Res.">
        <title>ERS1 a seven transmembrane domain protein from Saccharomyces cerevisiae.</title>
        <authorList>
            <person name="Hardwick K."/>
            <person name="Pelham H."/>
        </authorList>
    </citation>
    <scope>NUCLEOTIDE SEQUENCE [GENOMIC DNA]</scope>
</reference>
<reference key="2">
    <citation type="journal article" date="1992" name="Nature">
        <title>The complete DNA sequence of yeast chromosome III.</title>
        <authorList>
            <person name="Oliver S.G."/>
            <person name="van der Aart Q.J.M."/>
            <person name="Agostoni-Carbone M.L."/>
            <person name="Aigle M."/>
            <person name="Alberghina L."/>
            <person name="Alexandraki D."/>
            <person name="Antoine G."/>
            <person name="Anwar R."/>
            <person name="Ballesta J.P.G."/>
            <person name="Benit P."/>
            <person name="Berben G."/>
            <person name="Bergantino E."/>
            <person name="Biteau N."/>
            <person name="Bolle P.-A."/>
            <person name="Bolotin-Fukuhara M."/>
            <person name="Brown A."/>
            <person name="Brown A.J.P."/>
            <person name="Buhler J.-M."/>
            <person name="Carcano C."/>
            <person name="Carignani G."/>
            <person name="Cederberg H."/>
            <person name="Chanet R."/>
            <person name="Contreras R."/>
            <person name="Crouzet M."/>
            <person name="Daignan-Fornier B."/>
            <person name="Defoor E."/>
            <person name="Delgado M.D."/>
            <person name="Demolder J."/>
            <person name="Doira C."/>
            <person name="Dubois E."/>
            <person name="Dujon B."/>
            <person name="Duesterhoeft A."/>
            <person name="Erdmann D."/>
            <person name="Esteban M."/>
            <person name="Fabre F."/>
            <person name="Fairhead C."/>
            <person name="Faye G."/>
            <person name="Feldmann H."/>
            <person name="Fiers W."/>
            <person name="Francingues-Gaillard M.-C."/>
            <person name="Franco L."/>
            <person name="Frontali L."/>
            <person name="Fukuhara H."/>
            <person name="Fuller L.J."/>
            <person name="Galland P."/>
            <person name="Gent M.E."/>
            <person name="Gigot D."/>
            <person name="Gilliquet V."/>
            <person name="Glansdorff N."/>
            <person name="Goffeau A."/>
            <person name="Grenson M."/>
            <person name="Grisanti P."/>
            <person name="Grivell L.A."/>
            <person name="de Haan M."/>
            <person name="Haasemann M."/>
            <person name="Hatat D."/>
            <person name="Hoenicka J."/>
            <person name="Hegemann J.H."/>
            <person name="Herbert C.J."/>
            <person name="Hilger F."/>
            <person name="Hohmann S."/>
            <person name="Hollenberg C.P."/>
            <person name="Huse K."/>
            <person name="Iborra F."/>
            <person name="Indge K.J."/>
            <person name="Isono K."/>
            <person name="Jacq C."/>
            <person name="Jacquet M."/>
            <person name="James C.M."/>
            <person name="Jauniaux J.-C."/>
            <person name="Jia Y."/>
            <person name="Jimenez A."/>
            <person name="Kelly A."/>
            <person name="Kleinhans U."/>
            <person name="Kreisl P."/>
            <person name="Lanfranchi G."/>
            <person name="Lewis C."/>
            <person name="van der Linden C.G."/>
            <person name="Lucchini G."/>
            <person name="Lutzenkirchen K."/>
            <person name="Maat M.J."/>
            <person name="Mallet L."/>
            <person name="Mannhaupt G."/>
            <person name="Martegani E."/>
            <person name="Mathieu A."/>
            <person name="Maurer C.T.C."/>
            <person name="McConnell D."/>
            <person name="McKee R.A."/>
            <person name="Messenguy F."/>
            <person name="Mewes H.-W."/>
            <person name="Molemans F."/>
            <person name="Montague M.A."/>
            <person name="Muzi Falconi M."/>
            <person name="Navas L."/>
            <person name="Newlon C.S."/>
            <person name="Noone D."/>
            <person name="Pallier C."/>
            <person name="Panzeri L."/>
            <person name="Pearson B.M."/>
            <person name="Perea J."/>
            <person name="Philippsen P."/>
            <person name="Pierard A."/>
            <person name="Planta R.J."/>
            <person name="Plevani P."/>
            <person name="Poetsch B."/>
            <person name="Pohl F.M."/>
            <person name="Purnelle B."/>
            <person name="Ramezani Rad M."/>
            <person name="Rasmussen S.W."/>
            <person name="Raynal A."/>
            <person name="Remacha M.A."/>
            <person name="Richterich P."/>
            <person name="Roberts A.B."/>
            <person name="Rodriguez F."/>
            <person name="Sanz E."/>
            <person name="Schaaff-Gerstenschlaeger I."/>
            <person name="Scherens B."/>
            <person name="Schweitzer B."/>
            <person name="Shu Y."/>
            <person name="Skala J."/>
            <person name="Slonimski P.P."/>
            <person name="Sor F."/>
            <person name="Soustelle C."/>
            <person name="Spiegelberg R."/>
            <person name="Stateva L.I."/>
            <person name="Steensma H.Y."/>
            <person name="Steiner S."/>
            <person name="Thierry A."/>
            <person name="Thireos G."/>
            <person name="Tzermia M."/>
            <person name="Urrestarazu L.A."/>
            <person name="Valle G."/>
            <person name="Vetter I."/>
            <person name="van Vliet-Reedijk J.C."/>
            <person name="Voet M."/>
            <person name="Volckaert G."/>
            <person name="Vreken P."/>
            <person name="Wang H."/>
            <person name="Warmington J.R."/>
            <person name="von Wettstein D."/>
            <person name="Wicksteed B.L."/>
            <person name="Wilson C."/>
            <person name="Wurst H."/>
            <person name="Xu G."/>
            <person name="Yoshikawa A."/>
            <person name="Zimmermann F.K."/>
            <person name="Sgouros J.G."/>
        </authorList>
    </citation>
    <scope>NUCLEOTIDE SEQUENCE [LARGE SCALE GENOMIC DNA]</scope>
    <source>
        <strain>ATCC 204508 / S288c</strain>
    </source>
</reference>
<reference key="3">
    <citation type="journal article" date="2014" name="G3 (Bethesda)">
        <title>The reference genome sequence of Saccharomyces cerevisiae: Then and now.</title>
        <authorList>
            <person name="Engel S.R."/>
            <person name="Dietrich F.S."/>
            <person name="Fisk D.G."/>
            <person name="Binkley G."/>
            <person name="Balakrishnan R."/>
            <person name="Costanzo M.C."/>
            <person name="Dwight S.S."/>
            <person name="Hitz B.C."/>
            <person name="Karra K."/>
            <person name="Nash R.S."/>
            <person name="Weng S."/>
            <person name="Wong E.D."/>
            <person name="Lloyd P."/>
            <person name="Skrzypek M.S."/>
            <person name="Miyasato S.R."/>
            <person name="Simison M."/>
            <person name="Cherry J.M."/>
        </authorList>
    </citation>
    <scope>GENOME REANNOTATION</scope>
    <source>
        <strain>ATCC 204508 / S288c</strain>
    </source>
</reference>
<reference key="4">
    <citation type="journal article" date="2005" name="FEBS J.">
        <title>ERS1 encodes a functional homologue of the human lysosomal cystine transporter.</title>
        <authorList>
            <person name="Gao X.-D."/>
            <person name="Wang J."/>
            <person name="Keppler-Ross S."/>
            <person name="Dean N."/>
        </authorList>
    </citation>
    <scope>SUBCELLULAR LOCATION</scope>
    <scope>FUNCTION</scope>
</reference>
<comment type="function">
    <text evidence="3">Cystine/H(+) symporter that mediates export of cystine, the oxidized dimer of cysteine, from vacuoles/endodomes.</text>
</comment>
<comment type="catalytic activity">
    <reaction evidence="1">
        <text>L-cystine(out) + H(+)(out) = L-cystine(in) + H(+)(in)</text>
        <dbReference type="Rhea" id="RHEA:66172"/>
        <dbReference type="ChEBI" id="CHEBI:15378"/>
        <dbReference type="ChEBI" id="CHEBI:35491"/>
    </reaction>
    <physiologicalReaction direction="left-to-right" evidence="1">
        <dbReference type="Rhea" id="RHEA:66173"/>
    </physiologicalReaction>
</comment>
<comment type="subcellular location">
    <subcellularLocation>
        <location evidence="3">Endosome membrane</location>
        <topology evidence="3">Multi-pass membrane protein</topology>
    </subcellularLocation>
    <subcellularLocation>
        <location evidence="3">Vacuole membrane</location>
        <topology evidence="3">Multi-pass membrane protein</topology>
    </subcellularLocation>
</comment>
<comment type="similarity">
    <text evidence="4">Belongs to the cystinosin family.</text>
</comment>
<name>ERS1_YEAST</name>